<sequence length="101" mass="10974">MIPGEVFSAPGEIILNDGLPVTTLVVANTGDRPVQIGSHYHFAEANPLLQFDREAARGQRLDIPAGTAIRFEPGQSREVPLIPYRGARIVHGFRNETGEAL</sequence>
<feature type="chain" id="PRO_1000070735" description="Urease subunit beta">
    <location>
        <begin position="1"/>
        <end position="101"/>
    </location>
</feature>
<gene>
    <name evidence="1" type="primary">ureB</name>
    <name type="ordered locus">GbCGDNIH1_2163</name>
</gene>
<dbReference type="EC" id="3.5.1.5" evidence="1"/>
<dbReference type="EMBL" id="CP000394">
    <property type="protein sequence ID" value="ABI63061.1"/>
    <property type="molecule type" value="Genomic_DNA"/>
</dbReference>
<dbReference type="RefSeq" id="WP_011632863.1">
    <property type="nucleotide sequence ID" value="NC_008343.2"/>
</dbReference>
<dbReference type="SMR" id="Q0BQ41"/>
<dbReference type="STRING" id="391165.GbCGDNIH1_2163"/>
<dbReference type="KEGG" id="gbe:GbCGDNIH1_2163"/>
<dbReference type="eggNOG" id="COG0832">
    <property type="taxonomic scope" value="Bacteria"/>
</dbReference>
<dbReference type="HOGENOM" id="CLU_129707_1_1_5"/>
<dbReference type="OrthoDB" id="9797217at2"/>
<dbReference type="UniPathway" id="UPA00258">
    <property type="reaction ID" value="UER00370"/>
</dbReference>
<dbReference type="Proteomes" id="UP000001963">
    <property type="component" value="Chromosome"/>
</dbReference>
<dbReference type="GO" id="GO:0035550">
    <property type="term" value="C:urease complex"/>
    <property type="evidence" value="ECO:0007669"/>
    <property type="project" value="InterPro"/>
</dbReference>
<dbReference type="GO" id="GO:0009039">
    <property type="term" value="F:urease activity"/>
    <property type="evidence" value="ECO:0007669"/>
    <property type="project" value="UniProtKB-UniRule"/>
</dbReference>
<dbReference type="GO" id="GO:0043419">
    <property type="term" value="P:urea catabolic process"/>
    <property type="evidence" value="ECO:0007669"/>
    <property type="project" value="UniProtKB-UniRule"/>
</dbReference>
<dbReference type="CDD" id="cd00407">
    <property type="entry name" value="Urease_beta"/>
    <property type="match status" value="1"/>
</dbReference>
<dbReference type="Gene3D" id="2.10.150.10">
    <property type="entry name" value="Urease, beta subunit"/>
    <property type="match status" value="1"/>
</dbReference>
<dbReference type="HAMAP" id="MF_01954">
    <property type="entry name" value="Urease_beta"/>
    <property type="match status" value="1"/>
</dbReference>
<dbReference type="InterPro" id="IPR002019">
    <property type="entry name" value="Urease_beta-like"/>
</dbReference>
<dbReference type="InterPro" id="IPR036461">
    <property type="entry name" value="Urease_betasu_sf"/>
</dbReference>
<dbReference type="InterPro" id="IPR050069">
    <property type="entry name" value="Urease_subunit"/>
</dbReference>
<dbReference type="NCBIfam" id="NF009682">
    <property type="entry name" value="PRK13203.1"/>
    <property type="match status" value="1"/>
</dbReference>
<dbReference type="NCBIfam" id="TIGR00192">
    <property type="entry name" value="urease_beta"/>
    <property type="match status" value="1"/>
</dbReference>
<dbReference type="PANTHER" id="PTHR33569">
    <property type="entry name" value="UREASE"/>
    <property type="match status" value="1"/>
</dbReference>
<dbReference type="PANTHER" id="PTHR33569:SF1">
    <property type="entry name" value="UREASE"/>
    <property type="match status" value="1"/>
</dbReference>
<dbReference type="Pfam" id="PF00699">
    <property type="entry name" value="Urease_beta"/>
    <property type="match status" value="1"/>
</dbReference>
<dbReference type="SUPFAM" id="SSF51278">
    <property type="entry name" value="Urease, beta-subunit"/>
    <property type="match status" value="1"/>
</dbReference>
<comment type="catalytic activity">
    <reaction evidence="1">
        <text>urea + 2 H2O + H(+) = hydrogencarbonate + 2 NH4(+)</text>
        <dbReference type="Rhea" id="RHEA:20557"/>
        <dbReference type="ChEBI" id="CHEBI:15377"/>
        <dbReference type="ChEBI" id="CHEBI:15378"/>
        <dbReference type="ChEBI" id="CHEBI:16199"/>
        <dbReference type="ChEBI" id="CHEBI:17544"/>
        <dbReference type="ChEBI" id="CHEBI:28938"/>
        <dbReference type="EC" id="3.5.1.5"/>
    </reaction>
</comment>
<comment type="pathway">
    <text evidence="1">Nitrogen metabolism; urea degradation; CO(2) and NH(3) from urea (urease route): step 1/1.</text>
</comment>
<comment type="subunit">
    <text evidence="1">Heterotrimer of UreA (gamma), UreB (beta) and UreC (alpha) subunits. Three heterotrimers associate to form the active enzyme.</text>
</comment>
<comment type="subcellular location">
    <subcellularLocation>
        <location evidence="1">Cytoplasm</location>
    </subcellularLocation>
</comment>
<comment type="similarity">
    <text evidence="1">Belongs to the urease beta subunit family.</text>
</comment>
<organism>
    <name type="scientific">Granulibacter bethesdensis (strain ATCC BAA-1260 / CGDNIH1)</name>
    <dbReference type="NCBI Taxonomy" id="391165"/>
    <lineage>
        <taxon>Bacteria</taxon>
        <taxon>Pseudomonadati</taxon>
        <taxon>Pseudomonadota</taxon>
        <taxon>Alphaproteobacteria</taxon>
        <taxon>Acetobacterales</taxon>
        <taxon>Acetobacteraceae</taxon>
        <taxon>Granulibacter</taxon>
    </lineage>
</organism>
<proteinExistence type="inferred from homology"/>
<name>URE2_GRABC</name>
<accession>Q0BQ41</accession>
<reference key="1">
    <citation type="journal article" date="2007" name="J. Bacteriol.">
        <title>Genome sequence analysis of the emerging human pathogenic acetic acid bacterium Granulibacter bethesdensis.</title>
        <authorList>
            <person name="Greenberg D.E."/>
            <person name="Porcella S.F."/>
            <person name="Zelazny A.M."/>
            <person name="Virtaneva K."/>
            <person name="Sturdevant D.E."/>
            <person name="Kupko J.J. III"/>
            <person name="Barbian K.D."/>
            <person name="Babar A."/>
            <person name="Dorward D.W."/>
            <person name="Holland S.M."/>
        </authorList>
    </citation>
    <scope>NUCLEOTIDE SEQUENCE [LARGE SCALE GENOMIC DNA]</scope>
    <source>
        <strain>ATCC BAA-1260 / CGDNIH1</strain>
    </source>
</reference>
<evidence type="ECO:0000255" key="1">
    <source>
        <dbReference type="HAMAP-Rule" id="MF_01954"/>
    </source>
</evidence>
<protein>
    <recommendedName>
        <fullName evidence="1">Urease subunit beta</fullName>
        <ecNumber evidence="1">3.5.1.5</ecNumber>
    </recommendedName>
    <alternativeName>
        <fullName evidence="1">Urea amidohydrolase subunit beta</fullName>
    </alternativeName>
</protein>
<keyword id="KW-0963">Cytoplasm</keyword>
<keyword id="KW-0378">Hydrolase</keyword>
<keyword id="KW-1185">Reference proteome</keyword>